<proteinExistence type="inferred from homology"/>
<gene>
    <name evidence="1" type="primary">dtd</name>
</gene>
<comment type="function">
    <text evidence="1">An aminoacyl-tRNA editing enzyme that deacylates mischarged D-aminoacyl-tRNAs. Also deacylates mischarged glycyl-tRNA(Ala), protecting cells against glycine mischarging by AlaRS. Acts via tRNA-based rather than protein-based catalysis; rejects L-amino acids rather than detecting D-amino acids in the active site. By recycling D-aminoacyl-tRNA to D-amino acids and free tRNA molecules, this enzyme counteracts the toxicity associated with the formation of D-aminoacyl-tRNA entities in vivo and helps enforce protein L-homochirality.</text>
</comment>
<comment type="catalytic activity">
    <reaction evidence="1">
        <text>glycyl-tRNA(Ala) + H2O = tRNA(Ala) + glycine + H(+)</text>
        <dbReference type="Rhea" id="RHEA:53744"/>
        <dbReference type="Rhea" id="RHEA-COMP:9657"/>
        <dbReference type="Rhea" id="RHEA-COMP:13640"/>
        <dbReference type="ChEBI" id="CHEBI:15377"/>
        <dbReference type="ChEBI" id="CHEBI:15378"/>
        <dbReference type="ChEBI" id="CHEBI:57305"/>
        <dbReference type="ChEBI" id="CHEBI:78442"/>
        <dbReference type="ChEBI" id="CHEBI:78522"/>
        <dbReference type="EC" id="3.1.1.96"/>
    </reaction>
</comment>
<comment type="catalytic activity">
    <reaction evidence="1">
        <text>a D-aminoacyl-tRNA + H2O = a tRNA + a D-alpha-amino acid + H(+)</text>
        <dbReference type="Rhea" id="RHEA:13953"/>
        <dbReference type="Rhea" id="RHEA-COMP:10123"/>
        <dbReference type="Rhea" id="RHEA-COMP:10124"/>
        <dbReference type="ChEBI" id="CHEBI:15377"/>
        <dbReference type="ChEBI" id="CHEBI:15378"/>
        <dbReference type="ChEBI" id="CHEBI:59871"/>
        <dbReference type="ChEBI" id="CHEBI:78442"/>
        <dbReference type="ChEBI" id="CHEBI:79333"/>
        <dbReference type="EC" id="3.1.1.96"/>
    </reaction>
</comment>
<comment type="subunit">
    <text evidence="1">Homodimer.</text>
</comment>
<comment type="subcellular location">
    <subcellularLocation>
        <location evidence="1">Cytoplasm</location>
    </subcellularLocation>
</comment>
<comment type="domain">
    <text evidence="1">A Gly-cisPro motif from one monomer fits into the active site of the other monomer to allow specific chiral rejection of L-amino acids.</text>
</comment>
<comment type="similarity">
    <text evidence="1">Belongs to the DTD family.</text>
</comment>
<keyword id="KW-0963">Cytoplasm</keyword>
<keyword id="KW-0378">Hydrolase</keyword>
<keyword id="KW-0694">RNA-binding</keyword>
<keyword id="KW-0820">tRNA-binding</keyword>
<organism>
    <name type="scientific">Staphylococcus aureus</name>
    <dbReference type="NCBI Taxonomy" id="1280"/>
    <lineage>
        <taxon>Bacteria</taxon>
        <taxon>Bacillati</taxon>
        <taxon>Bacillota</taxon>
        <taxon>Bacilli</taxon>
        <taxon>Bacillales</taxon>
        <taxon>Staphylococcaceae</taxon>
        <taxon>Staphylococcus</taxon>
    </lineage>
</organism>
<dbReference type="EC" id="3.1.1.96" evidence="1"/>
<dbReference type="EMBL" id="D76414">
    <property type="protein sequence ID" value="BAA23139.1"/>
    <property type="molecule type" value="Genomic_DNA"/>
</dbReference>
<dbReference type="RefSeq" id="WP_000869983.1">
    <property type="nucleotide sequence ID" value="NZ_WYDB01000002.1"/>
</dbReference>
<dbReference type="SMR" id="P0A028"/>
<dbReference type="OMA" id="VFGADMK"/>
<dbReference type="GO" id="GO:0005737">
    <property type="term" value="C:cytoplasm"/>
    <property type="evidence" value="ECO:0007669"/>
    <property type="project" value="UniProtKB-SubCell"/>
</dbReference>
<dbReference type="GO" id="GO:0051500">
    <property type="term" value="F:D-tyrosyl-tRNA(Tyr) deacylase activity"/>
    <property type="evidence" value="ECO:0007669"/>
    <property type="project" value="TreeGrafter"/>
</dbReference>
<dbReference type="GO" id="GO:0106026">
    <property type="term" value="F:Gly-tRNA(Ala) deacylase activity"/>
    <property type="evidence" value="ECO:0007669"/>
    <property type="project" value="UniProtKB-UniRule"/>
</dbReference>
<dbReference type="GO" id="GO:0043908">
    <property type="term" value="F:Ser(Gly)-tRNA(Ala) hydrolase activity"/>
    <property type="evidence" value="ECO:0007669"/>
    <property type="project" value="UniProtKB-UniRule"/>
</dbReference>
<dbReference type="GO" id="GO:0000049">
    <property type="term" value="F:tRNA binding"/>
    <property type="evidence" value="ECO:0007669"/>
    <property type="project" value="UniProtKB-UniRule"/>
</dbReference>
<dbReference type="GO" id="GO:0019478">
    <property type="term" value="P:D-amino acid catabolic process"/>
    <property type="evidence" value="ECO:0007669"/>
    <property type="project" value="UniProtKB-UniRule"/>
</dbReference>
<dbReference type="FunFam" id="3.50.80.10:FF:000005">
    <property type="entry name" value="D-aminoacyl-tRNA deacylase"/>
    <property type="match status" value="1"/>
</dbReference>
<dbReference type="Gene3D" id="3.50.80.10">
    <property type="entry name" value="D-tyrosyl-tRNA(Tyr) deacylase"/>
    <property type="match status" value="1"/>
</dbReference>
<dbReference type="HAMAP" id="MF_00518">
    <property type="entry name" value="Deacylase_Dtd"/>
    <property type="match status" value="1"/>
</dbReference>
<dbReference type="InterPro" id="IPR003732">
    <property type="entry name" value="Daa-tRNA_deacyls_DTD"/>
</dbReference>
<dbReference type="InterPro" id="IPR023509">
    <property type="entry name" value="DTD-like_sf"/>
</dbReference>
<dbReference type="NCBIfam" id="TIGR00256">
    <property type="entry name" value="D-aminoacyl-tRNA deacylase"/>
    <property type="match status" value="1"/>
</dbReference>
<dbReference type="PANTHER" id="PTHR10472:SF5">
    <property type="entry name" value="D-AMINOACYL-TRNA DEACYLASE 1"/>
    <property type="match status" value="1"/>
</dbReference>
<dbReference type="PANTHER" id="PTHR10472">
    <property type="entry name" value="D-TYROSYL-TRNA TYR DEACYLASE"/>
    <property type="match status" value="1"/>
</dbReference>
<dbReference type="Pfam" id="PF02580">
    <property type="entry name" value="Tyr_Deacylase"/>
    <property type="match status" value="1"/>
</dbReference>
<dbReference type="SUPFAM" id="SSF69500">
    <property type="entry name" value="DTD-like"/>
    <property type="match status" value="1"/>
</dbReference>
<sequence length="150" mass="16697">MKVVVQRVKEASVTNDTLNNQIKKGYCLLVGIGQNSTEQDADVIAKKIANARLFEDDNNKLNFNIQQMNGEILSVSQFTLYADVKKGNRPGFSNSKNPDQAVKIYEYFNDALRAYGLTVKTGEFGTHMNVSINNDGPVTIIYESQDGKIQ</sequence>
<name>DTD_STAAU</name>
<protein>
    <recommendedName>
        <fullName evidence="1">D-aminoacyl-tRNA deacylase</fullName>
        <shortName evidence="1">DTD</shortName>
        <ecNumber evidence="1">3.1.1.96</ecNumber>
    </recommendedName>
    <alternativeName>
        <fullName evidence="1">Gly-tRNA(Ala) deacylase</fullName>
    </alternativeName>
</protein>
<feature type="chain" id="PRO_0000164585" description="D-aminoacyl-tRNA deacylase">
    <location>
        <begin position="1"/>
        <end position="150"/>
    </location>
</feature>
<feature type="short sequence motif" description="Gly-cisPro motif, important for rejection of L-amino acids" evidence="1">
    <location>
        <begin position="136"/>
        <end position="137"/>
    </location>
</feature>
<evidence type="ECO:0000255" key="1">
    <source>
        <dbReference type="HAMAP-Rule" id="MF_00518"/>
    </source>
</evidence>
<reference key="1">
    <citation type="journal article" date="1997" name="J. Bacteriol.">
        <title>Increase of methicillin resistance in Staphylococcus aureus caused by deletion of a gene whose product is homologous to lytic enzymes.</title>
        <authorList>
            <person name="Fujimura T."/>
            <person name="Murakami K."/>
        </authorList>
    </citation>
    <scope>NUCLEOTIDE SEQUENCE [GENOMIC DNA]</scope>
    <source>
        <strain>SR17238</strain>
    </source>
</reference>
<accession>P0A028</accession>
<accession>O32420</accession>